<organism>
    <name type="scientific">Thermococcus kodakarensis (strain ATCC BAA-918 / JCM 12380 / KOD1)</name>
    <name type="common">Pyrococcus kodakaraensis (strain KOD1)</name>
    <dbReference type="NCBI Taxonomy" id="69014"/>
    <lineage>
        <taxon>Archaea</taxon>
        <taxon>Methanobacteriati</taxon>
        <taxon>Methanobacteriota</taxon>
        <taxon>Thermococci</taxon>
        <taxon>Thermococcales</taxon>
        <taxon>Thermococcaceae</taxon>
        <taxon>Thermococcus</taxon>
    </lineage>
</organism>
<comment type="function">
    <text evidence="1">Exchanges the guanine residue with 7-cyano-7-deazaguanine (preQ0) at position 15 in the dihydrouridine loop (D-loop) of archaeal tRNAs.</text>
</comment>
<comment type="catalytic activity">
    <reaction evidence="1">
        <text>guanosine(15) in tRNA + 7-cyano-7-deazaguanine = 7-cyano-7-carbaguanosine(15) in tRNA + guanine</text>
        <dbReference type="Rhea" id="RHEA:43164"/>
        <dbReference type="Rhea" id="RHEA-COMP:10371"/>
        <dbReference type="Rhea" id="RHEA-COMP:10372"/>
        <dbReference type="ChEBI" id="CHEBI:16235"/>
        <dbReference type="ChEBI" id="CHEBI:45075"/>
        <dbReference type="ChEBI" id="CHEBI:74269"/>
        <dbReference type="ChEBI" id="CHEBI:82850"/>
        <dbReference type="EC" id="2.4.2.48"/>
    </reaction>
</comment>
<comment type="cofactor">
    <cofactor evidence="1">
        <name>Zn(2+)</name>
        <dbReference type="ChEBI" id="CHEBI:29105"/>
    </cofactor>
    <text evidence="1">Binds 1 zinc ion per subunit.</text>
</comment>
<comment type="pathway">
    <text evidence="1">tRNA modification; archaeosine-tRNA biosynthesis.</text>
</comment>
<comment type="disruption phenotype">
    <text evidence="2">Temperature sensitive growth at 85 but not 93 degrees Celsius.</text>
</comment>
<comment type="similarity">
    <text evidence="1">Belongs to the archaeosine tRNA-ribosyltransferase family.</text>
</comment>
<keyword id="KW-0328">Glycosyltransferase</keyword>
<keyword id="KW-0479">Metal-binding</keyword>
<keyword id="KW-1185">Reference proteome</keyword>
<keyword id="KW-0808">Transferase</keyword>
<keyword id="KW-0819">tRNA processing</keyword>
<keyword id="KW-0862">Zinc</keyword>
<evidence type="ECO:0000255" key="1">
    <source>
        <dbReference type="HAMAP-Rule" id="MF_01634"/>
    </source>
</evidence>
<evidence type="ECO:0000269" key="2">
    <source>
    </source>
</evidence>
<proteinExistence type="inferred from homology"/>
<reference key="1">
    <citation type="journal article" date="2005" name="Genome Res.">
        <title>Complete genome sequence of the hyperthermophilic archaeon Thermococcus kodakaraensis KOD1 and comparison with Pyrococcus genomes.</title>
        <authorList>
            <person name="Fukui T."/>
            <person name="Atomi H."/>
            <person name="Kanai T."/>
            <person name="Matsumi R."/>
            <person name="Fujiwara S."/>
            <person name="Imanaka T."/>
        </authorList>
    </citation>
    <scope>NUCLEOTIDE SEQUENCE [LARGE SCALE GENOMIC DNA]</scope>
    <source>
        <strain>ATCC BAA-918 / JCM 12380 / KOD1</strain>
    </source>
</reference>
<reference key="2">
    <citation type="journal article" date="2019" name="Nucleic Acids Res.">
        <title>Random mutagenesis of a hyperthermophilic archaeon identified tRNA modifications associated with cellular hyperthermotolerance.</title>
        <authorList>
            <person name="Orita I."/>
            <person name="Futatsuishi R."/>
            <person name="Adachi K."/>
            <person name="Ohira T."/>
            <person name="Kaneko A."/>
            <person name="Minowa K."/>
            <person name="Suzuki M."/>
            <person name="Tamura T."/>
            <person name="Nakamura S."/>
            <person name="Imanaka T."/>
            <person name="Suzuki T."/>
            <person name="Fukui T."/>
        </authorList>
    </citation>
    <scope>DISRUPTION PHENOTYPE</scope>
    <source>
        <strain>ATCC BAA-918 / JCM 12380 / KOD1</strain>
    </source>
</reference>
<accession>Q5JHC0</accession>
<dbReference type="EC" id="2.4.2.48" evidence="1"/>
<dbReference type="EMBL" id="AP006878">
    <property type="protein sequence ID" value="BAD84949.1"/>
    <property type="molecule type" value="Genomic_DNA"/>
</dbReference>
<dbReference type="RefSeq" id="WP_011249711.1">
    <property type="nucleotide sequence ID" value="NC_006624.1"/>
</dbReference>
<dbReference type="SMR" id="Q5JHC0"/>
<dbReference type="FunCoup" id="Q5JHC0">
    <property type="interactions" value="22"/>
</dbReference>
<dbReference type="STRING" id="69014.TK0760"/>
<dbReference type="EnsemblBacteria" id="BAD84949">
    <property type="protein sequence ID" value="BAD84949"/>
    <property type="gene ID" value="TK0760"/>
</dbReference>
<dbReference type="GeneID" id="78447275"/>
<dbReference type="KEGG" id="tko:TK0760"/>
<dbReference type="PATRIC" id="fig|69014.16.peg.740"/>
<dbReference type="eggNOG" id="arCOG00989">
    <property type="taxonomic scope" value="Archaea"/>
</dbReference>
<dbReference type="eggNOG" id="arCOG00991">
    <property type="taxonomic scope" value="Archaea"/>
</dbReference>
<dbReference type="HOGENOM" id="CLU_030083_0_0_2"/>
<dbReference type="InParanoid" id="Q5JHC0"/>
<dbReference type="OrthoDB" id="6871at2157"/>
<dbReference type="PhylomeDB" id="Q5JHC0"/>
<dbReference type="UniPathway" id="UPA00393"/>
<dbReference type="Proteomes" id="UP000000536">
    <property type="component" value="Chromosome"/>
</dbReference>
<dbReference type="GO" id="GO:0005737">
    <property type="term" value="C:cytoplasm"/>
    <property type="evidence" value="ECO:0000318"/>
    <property type="project" value="GO_Central"/>
</dbReference>
<dbReference type="GO" id="GO:0016763">
    <property type="term" value="F:pentosyltransferase activity"/>
    <property type="evidence" value="ECO:0007669"/>
    <property type="project" value="UniProtKB-UniRule"/>
</dbReference>
<dbReference type="GO" id="GO:0003723">
    <property type="term" value="F:RNA binding"/>
    <property type="evidence" value="ECO:0007669"/>
    <property type="project" value="InterPro"/>
</dbReference>
<dbReference type="GO" id="GO:0008270">
    <property type="term" value="F:zinc ion binding"/>
    <property type="evidence" value="ECO:0007669"/>
    <property type="project" value="UniProtKB-UniRule"/>
</dbReference>
<dbReference type="GO" id="GO:0002099">
    <property type="term" value="P:tRNA wobble guanine modification"/>
    <property type="evidence" value="ECO:0000318"/>
    <property type="project" value="GO_Central"/>
</dbReference>
<dbReference type="CDD" id="cd21149">
    <property type="entry name" value="PUA_archaeosine_TGT"/>
    <property type="match status" value="1"/>
</dbReference>
<dbReference type="Gene3D" id="3.90.1020.10">
    <property type="entry name" value="ArcTGT, C1 domain"/>
    <property type="match status" value="1"/>
</dbReference>
<dbReference type="Gene3D" id="3.10.450.90">
    <property type="entry name" value="ArcTGT, C2 domain"/>
    <property type="match status" value="1"/>
</dbReference>
<dbReference type="Gene3D" id="2.30.130.10">
    <property type="entry name" value="PUA domain"/>
    <property type="match status" value="1"/>
</dbReference>
<dbReference type="Gene3D" id="3.20.20.105">
    <property type="entry name" value="Queuine tRNA-ribosyltransferase-like"/>
    <property type="match status" value="1"/>
</dbReference>
<dbReference type="HAMAP" id="MF_01634">
    <property type="entry name" value="TgtA_arch"/>
    <property type="match status" value="1"/>
</dbReference>
<dbReference type="InterPro" id="IPR050076">
    <property type="entry name" value="ArchSynthase1/Queuine_TRR"/>
</dbReference>
<dbReference type="InterPro" id="IPR038370">
    <property type="entry name" value="ArcTGT_C1_sf"/>
</dbReference>
<dbReference type="InterPro" id="IPR002478">
    <property type="entry name" value="PUA"/>
</dbReference>
<dbReference type="InterPro" id="IPR015947">
    <property type="entry name" value="PUA-like_sf"/>
</dbReference>
<dbReference type="InterPro" id="IPR036974">
    <property type="entry name" value="PUA_sf"/>
</dbReference>
<dbReference type="InterPro" id="IPR036511">
    <property type="entry name" value="TGT-like_sf"/>
</dbReference>
<dbReference type="InterPro" id="IPR032729">
    <property type="entry name" value="TGT_C1"/>
</dbReference>
<dbReference type="InterPro" id="IPR029402">
    <property type="entry name" value="TGT_C2"/>
</dbReference>
<dbReference type="InterPro" id="IPR038250">
    <property type="entry name" value="TGT_C2_sf"/>
</dbReference>
<dbReference type="InterPro" id="IPR004804">
    <property type="entry name" value="TgtA"/>
</dbReference>
<dbReference type="InterPro" id="IPR002616">
    <property type="entry name" value="tRNA_ribo_trans-like"/>
</dbReference>
<dbReference type="InterPro" id="IPR004521">
    <property type="entry name" value="Uncharacterised_CHP00451"/>
</dbReference>
<dbReference type="NCBIfam" id="TIGR00432">
    <property type="entry name" value="arcsn_tRNA_tgt"/>
    <property type="match status" value="1"/>
</dbReference>
<dbReference type="NCBIfam" id="TIGR00449">
    <property type="entry name" value="tgt_general"/>
    <property type="match status" value="1"/>
</dbReference>
<dbReference type="NCBIfam" id="TIGR00451">
    <property type="entry name" value="unchar_dom_2"/>
    <property type="match status" value="1"/>
</dbReference>
<dbReference type="PANTHER" id="PTHR46499">
    <property type="entry name" value="QUEUINE TRNA-RIBOSYLTRANSFERASE"/>
    <property type="match status" value="1"/>
</dbReference>
<dbReference type="PANTHER" id="PTHR46499:SF1">
    <property type="entry name" value="QUEUINE TRNA-RIBOSYLTRANSFERASE"/>
    <property type="match status" value="1"/>
</dbReference>
<dbReference type="Pfam" id="PF01472">
    <property type="entry name" value="PUA"/>
    <property type="match status" value="1"/>
</dbReference>
<dbReference type="Pfam" id="PF01702">
    <property type="entry name" value="TGT"/>
    <property type="match status" value="1"/>
</dbReference>
<dbReference type="Pfam" id="PF14809">
    <property type="entry name" value="TGT_C1"/>
    <property type="match status" value="1"/>
</dbReference>
<dbReference type="Pfam" id="PF14810">
    <property type="entry name" value="TGT_C2"/>
    <property type="match status" value="1"/>
</dbReference>
<dbReference type="SMART" id="SM00359">
    <property type="entry name" value="PUA"/>
    <property type="match status" value="1"/>
</dbReference>
<dbReference type="SUPFAM" id="SSF88802">
    <property type="entry name" value="Pre-PUA domain"/>
    <property type="match status" value="1"/>
</dbReference>
<dbReference type="SUPFAM" id="SSF88697">
    <property type="entry name" value="PUA domain-like"/>
    <property type="match status" value="1"/>
</dbReference>
<dbReference type="SUPFAM" id="SSF51713">
    <property type="entry name" value="tRNA-guanine transglycosylase"/>
    <property type="match status" value="1"/>
</dbReference>
<dbReference type="PROSITE" id="PS50890">
    <property type="entry name" value="PUA"/>
    <property type="match status" value="1"/>
</dbReference>
<feature type="chain" id="PRO_0000247883" description="tRNA-guanine(15) transglycosylase">
    <location>
        <begin position="1"/>
        <end position="580"/>
    </location>
</feature>
<feature type="domain" description="PUA" evidence="1">
    <location>
        <begin position="504"/>
        <end position="579"/>
    </location>
</feature>
<feature type="active site" description="Nucleophile" evidence="1">
    <location>
        <position position="91"/>
    </location>
</feature>
<feature type="binding site" evidence="1">
    <location>
        <position position="126"/>
    </location>
    <ligand>
        <name>substrate</name>
    </ligand>
</feature>
<feature type="binding site" evidence="1">
    <location>
        <position position="192"/>
    </location>
    <ligand>
        <name>substrate</name>
    </ligand>
</feature>
<feature type="binding site" evidence="1">
    <location>
        <position position="275"/>
    </location>
    <ligand>
        <name>Zn(2+)</name>
        <dbReference type="ChEBI" id="CHEBI:29105"/>
    </ligand>
</feature>
<feature type="binding site" evidence="1">
    <location>
        <position position="277"/>
    </location>
    <ligand>
        <name>Zn(2+)</name>
        <dbReference type="ChEBI" id="CHEBI:29105"/>
    </ligand>
</feature>
<feature type="binding site" evidence="1">
    <location>
        <position position="280"/>
    </location>
    <ligand>
        <name>Zn(2+)</name>
        <dbReference type="ChEBI" id="CHEBI:29105"/>
    </ligand>
</feature>
<protein>
    <recommendedName>
        <fullName evidence="1">tRNA-guanine(15) transglycosylase</fullName>
        <ecNumber evidence="1">2.4.2.48</ecNumber>
    </recommendedName>
    <alternativeName>
        <fullName evidence="1">7-cyano-7-deazaguanine tRNA-ribosyltransferase</fullName>
    </alternativeName>
    <alternativeName>
        <fullName evidence="1">Archaeal tRNA-guanine transglycosylase</fullName>
    </alternativeName>
</protein>
<gene>
    <name evidence="1" type="primary">tgtA</name>
    <name type="ordered locus">TK0760</name>
</gene>
<sequence length="580" mass="66206">MVDFRFEVKARDASGRIGKLTVNGKTVETPAIMPVINPKQLIVTPKELKEMGFGMIITNSYIIYKTPELREKALEVGIHKLLDYDGIIEVDSGSFQLMRYGGVEVTNREIVEFQHEIGVDIGTFLDIPTPPDAPREKAEEDLRITLERAKEAEEIKEIAMNAAVQGSTYPDLRTYAARELSRMNFEIHPIGAVVPLMESYRYRDLVDVVIASKVGLRPDRPVHLFGAGHPMIFALAVAMGIDLFDSASYALYAKDDRYMTPEGTKRLEELEYFPCSCPVCSRYTPQELREMPKEERTRLLAIHNLWVIREELNRVKQAIKEGELWRLVDERARSHPKLYAAYKRLLEYREYLEKNEPVTKASAFFKVSEEALRWPIVERARERAERVRSKFPETISHPIFGEIPKYLSLSYPFAQSEGEEDFTVEKPEKGEARKYVMAVAEYQFGEGAGEAFKDAFVELSRKTGMPRQIKAKGKHLATFRAEDGLLTLGIEGAKRLHEVLPFPRMRVVVDEDAEPFARRGKNVFAKFVVDADLNIRPYDEVLVVNRNDELLATGQTLLNGEELKIFQQGLAVKVRRGVEK</sequence>
<name>ATGT_THEKO</name>